<gene>
    <name type="ordered locus">MW2494</name>
</gene>
<name>Y2494_STAAW</name>
<feature type="chain" id="PRO_0000094994" description="UPF0291 protein MW2494">
    <location>
        <begin position="1"/>
        <end position="76"/>
    </location>
</feature>
<keyword id="KW-0963">Cytoplasm</keyword>
<sequence length="76" mass="8834">MKILDRINELANKEKVQPLTVAEKQEQHALRQDYLSMIRGQVLTTFSTIKVVDPIGQDVTPDKVYDLRQQYGYIQN</sequence>
<evidence type="ECO:0000255" key="1">
    <source>
        <dbReference type="HAMAP-Rule" id="MF_01103"/>
    </source>
</evidence>
<dbReference type="EMBL" id="BA000033">
    <property type="protein sequence ID" value="BAB96359.1"/>
    <property type="molecule type" value="Genomic_DNA"/>
</dbReference>
<dbReference type="RefSeq" id="WP_000697134.1">
    <property type="nucleotide sequence ID" value="NC_003923.1"/>
</dbReference>
<dbReference type="SMR" id="P60079"/>
<dbReference type="KEGG" id="sam:MW2494"/>
<dbReference type="HOGENOM" id="CLU_173137_0_2_9"/>
<dbReference type="GO" id="GO:0005737">
    <property type="term" value="C:cytoplasm"/>
    <property type="evidence" value="ECO:0007669"/>
    <property type="project" value="UniProtKB-SubCell"/>
</dbReference>
<dbReference type="Gene3D" id="1.10.287.540">
    <property type="entry name" value="Helix hairpin bin"/>
    <property type="match status" value="1"/>
</dbReference>
<dbReference type="HAMAP" id="MF_01103">
    <property type="entry name" value="UPF0291"/>
    <property type="match status" value="1"/>
</dbReference>
<dbReference type="InterPro" id="IPR009242">
    <property type="entry name" value="DUF896"/>
</dbReference>
<dbReference type="PANTHER" id="PTHR37300:SF2">
    <property type="entry name" value="UPF0291 PROTEIN BC_1827"/>
    <property type="match status" value="1"/>
</dbReference>
<dbReference type="PANTHER" id="PTHR37300">
    <property type="entry name" value="UPF0291 PROTEIN CBO2609/CLC_2481"/>
    <property type="match status" value="1"/>
</dbReference>
<dbReference type="Pfam" id="PF05979">
    <property type="entry name" value="DUF896"/>
    <property type="match status" value="1"/>
</dbReference>
<dbReference type="SUPFAM" id="SSF158221">
    <property type="entry name" value="YnzC-like"/>
    <property type="match status" value="1"/>
</dbReference>
<organism>
    <name type="scientific">Staphylococcus aureus (strain MW2)</name>
    <dbReference type="NCBI Taxonomy" id="196620"/>
    <lineage>
        <taxon>Bacteria</taxon>
        <taxon>Bacillati</taxon>
        <taxon>Bacillota</taxon>
        <taxon>Bacilli</taxon>
        <taxon>Bacillales</taxon>
        <taxon>Staphylococcaceae</taxon>
        <taxon>Staphylococcus</taxon>
    </lineage>
</organism>
<proteinExistence type="inferred from homology"/>
<reference key="1">
    <citation type="journal article" date="2002" name="Lancet">
        <title>Genome and virulence determinants of high virulence community-acquired MRSA.</title>
        <authorList>
            <person name="Baba T."/>
            <person name="Takeuchi F."/>
            <person name="Kuroda M."/>
            <person name="Yuzawa H."/>
            <person name="Aoki K."/>
            <person name="Oguchi A."/>
            <person name="Nagai Y."/>
            <person name="Iwama N."/>
            <person name="Asano K."/>
            <person name="Naimi T."/>
            <person name="Kuroda H."/>
            <person name="Cui L."/>
            <person name="Yamamoto K."/>
            <person name="Hiramatsu K."/>
        </authorList>
    </citation>
    <scope>NUCLEOTIDE SEQUENCE [LARGE SCALE GENOMIC DNA]</scope>
    <source>
        <strain>MW2</strain>
    </source>
</reference>
<comment type="subcellular location">
    <subcellularLocation>
        <location evidence="1">Cytoplasm</location>
    </subcellularLocation>
</comment>
<comment type="similarity">
    <text evidence="1">Belongs to the UPF0291 family.</text>
</comment>
<protein>
    <recommendedName>
        <fullName evidence="1">UPF0291 protein MW2494</fullName>
    </recommendedName>
</protein>
<accession>P60079</accession>
<accession>Q99R65</accession>